<protein>
    <recommendedName>
        <fullName>G-protein coupled receptor homolog U12</fullName>
    </recommendedName>
</protein>
<sequence>MDTVIELSKLLFKGNASCTSTPTLKTARIMESAVTGITLTTSIPMIIIVVTTMILYHRVAKHNATSFYVITLFASDFVLMWCVFFMTVNRKQLFSFNRFFCQLVYFIYHAVCSYSISMLAIIATIRYKTLHRRKKTESKTSSTGRNIGILLLASSMCAIPTALFVKTNGMKKTGKCVVYISSKKAYELFLAVKIVFSFIWGVLPTMVFSFFYVIFCKALHDVTEKKYKKTLFFIRILLLSFLLIQIPYIAILICEIAFLYMPQNTCFWLARVEILQLIIRLMPQVHCFSNPLVYAFTGGELRNRFTACFQSFFPKTLCSTQKRKDSDASEHDQNSKSKASVEKNQPL</sequence>
<name>UL33_HHV6U</name>
<proteinExistence type="inferred from homology"/>
<organismHost>
    <name type="scientific">Homo sapiens</name>
    <name type="common">Human</name>
    <dbReference type="NCBI Taxonomy" id="9606"/>
</organismHost>
<evidence type="ECO:0000255" key="1"/>
<evidence type="ECO:0000255" key="2">
    <source>
        <dbReference type="PROSITE-ProRule" id="PRU00521"/>
    </source>
</evidence>
<evidence type="ECO:0000256" key="3">
    <source>
        <dbReference type="SAM" id="MobiDB-lite"/>
    </source>
</evidence>
<evidence type="ECO:0000305" key="4"/>
<reference key="1">
    <citation type="journal article" date="1995" name="Virology">
        <title>The DNA sequence of human herpesvirus-6: structure, coding content, and genome evolution.</title>
        <authorList>
            <person name="Gompels U.A."/>
            <person name="Nicholas J."/>
            <person name="Lawrence G.L."/>
            <person name="Jones M."/>
            <person name="Thomson B.J."/>
            <person name="Martin M.E.D."/>
            <person name="Efstathiou S."/>
            <person name="Craxton M.A."/>
            <person name="Macaulay H.A."/>
        </authorList>
    </citation>
    <scope>NUCLEOTIDE SEQUENCE [LARGE SCALE GENOMIC DNA]</scope>
</reference>
<dbReference type="EMBL" id="X83413">
    <property type="protein sequence ID" value="CAA58440.2"/>
    <property type="molecule type" value="Genomic_DNA"/>
</dbReference>
<dbReference type="SMR" id="P52380"/>
<dbReference type="Proteomes" id="UP000009295">
    <property type="component" value="Segment"/>
</dbReference>
<dbReference type="GO" id="GO:0016020">
    <property type="term" value="C:membrane"/>
    <property type="evidence" value="ECO:0007669"/>
    <property type="project" value="UniProtKB-SubCell"/>
</dbReference>
<dbReference type="GO" id="GO:0004930">
    <property type="term" value="F:G protein-coupled receptor activity"/>
    <property type="evidence" value="ECO:0007669"/>
    <property type="project" value="UniProtKB-KW"/>
</dbReference>
<dbReference type="CDD" id="cd00637">
    <property type="entry name" value="7tm_classA_rhodopsin-like"/>
    <property type="match status" value="1"/>
</dbReference>
<dbReference type="Gene3D" id="1.20.1070.10">
    <property type="entry name" value="Rhodopsin 7-helix transmembrane proteins"/>
    <property type="match status" value="1"/>
</dbReference>
<dbReference type="InterPro" id="IPR050119">
    <property type="entry name" value="CCR1-9-like"/>
</dbReference>
<dbReference type="InterPro" id="IPR000276">
    <property type="entry name" value="GPCR_Rhodpsn"/>
</dbReference>
<dbReference type="InterPro" id="IPR017452">
    <property type="entry name" value="GPCR_Rhodpsn_7TM"/>
</dbReference>
<dbReference type="PANTHER" id="PTHR10489">
    <property type="entry name" value="CELL ADHESION MOLECULE"/>
    <property type="match status" value="1"/>
</dbReference>
<dbReference type="PANTHER" id="PTHR10489:SF932">
    <property type="entry name" value="G-PROTEIN COUPLED RECEPTORS FAMILY 1 PROFILE DOMAIN-CONTAINING PROTEIN"/>
    <property type="match status" value="1"/>
</dbReference>
<dbReference type="Pfam" id="PF00001">
    <property type="entry name" value="7tm_1"/>
    <property type="match status" value="1"/>
</dbReference>
<dbReference type="PRINTS" id="PR00237">
    <property type="entry name" value="GPCRRHODOPSN"/>
</dbReference>
<dbReference type="SUPFAM" id="SSF81321">
    <property type="entry name" value="Family A G protein-coupled receptor-like"/>
    <property type="match status" value="1"/>
</dbReference>
<dbReference type="PROSITE" id="PS50262">
    <property type="entry name" value="G_PROTEIN_RECEP_F1_2"/>
    <property type="match status" value="1"/>
</dbReference>
<feature type="chain" id="PRO_0000070241" description="G-protein coupled receptor homolog U12">
    <location>
        <begin position="1"/>
        <end position="347"/>
    </location>
</feature>
<feature type="transmembrane region" description="Helical; Name=2" evidence="1">
    <location>
        <begin position="36"/>
        <end position="56"/>
    </location>
</feature>
<feature type="transmembrane region" description="Helical; Name=3" evidence="1">
    <location>
        <begin position="67"/>
        <end position="87"/>
    </location>
</feature>
<feature type="transmembrane region" description="Helical; Name=4" evidence="1">
    <location>
        <begin position="103"/>
        <end position="124"/>
    </location>
</feature>
<feature type="transmembrane region" description="Helical; Name=5" evidence="1">
    <location>
        <begin position="147"/>
        <end position="167"/>
    </location>
</feature>
<feature type="transmembrane region" description="Helical; Name=6" evidence="1">
    <location>
        <begin position="194"/>
        <end position="214"/>
    </location>
</feature>
<feature type="transmembrane region" description="Helical; Name=7" evidence="1">
    <location>
        <begin position="236"/>
        <end position="256"/>
    </location>
</feature>
<feature type="region of interest" description="Disordered" evidence="3">
    <location>
        <begin position="321"/>
        <end position="347"/>
    </location>
</feature>
<feature type="compositionally biased region" description="Basic and acidic residues" evidence="3">
    <location>
        <begin position="322"/>
        <end position="341"/>
    </location>
</feature>
<feature type="disulfide bond" evidence="2">
    <location>
        <begin position="101"/>
        <end position="176"/>
    </location>
</feature>
<gene>
    <name type="primary">U12</name>
    <name type="synonym">P1RF1</name>
</gene>
<accession>P52380</accession>
<accession>Q69547</accession>
<keyword id="KW-1015">Disulfide bond</keyword>
<keyword id="KW-0297">G-protein coupled receptor</keyword>
<keyword id="KW-0472">Membrane</keyword>
<keyword id="KW-0675">Receptor</keyword>
<keyword id="KW-1185">Reference proteome</keyword>
<keyword id="KW-0807">Transducer</keyword>
<keyword id="KW-0812">Transmembrane</keyword>
<keyword id="KW-1133">Transmembrane helix</keyword>
<organism>
    <name type="scientific">Human herpesvirus 6A (strain Uganda-1102)</name>
    <name type="common">HHV-6 variant A</name>
    <name type="synonym">Human B lymphotropic virus</name>
    <dbReference type="NCBI Taxonomy" id="10370"/>
    <lineage>
        <taxon>Viruses</taxon>
        <taxon>Duplodnaviria</taxon>
        <taxon>Heunggongvirae</taxon>
        <taxon>Peploviricota</taxon>
        <taxon>Herviviricetes</taxon>
        <taxon>Herpesvirales</taxon>
        <taxon>Orthoherpesviridae</taxon>
        <taxon>Betaherpesvirinae</taxon>
        <taxon>Roseolovirus</taxon>
        <taxon>Roseolovirus humanbeta6a</taxon>
        <taxon>Human betaherpesvirus 6A</taxon>
    </lineage>
</organism>
<comment type="function">
    <text>Probable G-protein coupled receptor.</text>
</comment>
<comment type="subcellular location">
    <subcellularLocation>
        <location evidence="4">Membrane</location>
        <topology evidence="4">Multi-pass membrane protein</topology>
    </subcellularLocation>
</comment>
<comment type="similarity">
    <text evidence="2">Belongs to the G-protein coupled receptor 1 family.</text>
</comment>
<comment type="caution">
    <text evidence="4">It is uncertain whether Met-1 or Met-30 is the initiator.</text>
</comment>